<evidence type="ECO:0000250" key="1"/>
<evidence type="ECO:0000255" key="2">
    <source>
        <dbReference type="HAMAP-Rule" id="MF_01109"/>
    </source>
</evidence>
<protein>
    <recommendedName>
        <fullName evidence="2">Ornithine carbamoyltransferase</fullName>
        <shortName evidence="2">OTCase</shortName>
        <ecNumber evidence="2">2.1.3.3</ecNumber>
    </recommendedName>
</protein>
<sequence length="306" mass="35004">MAIKHFLQFKDFTREELEYVFERTSWIKNQFKSYQKYWPLSDRTLVMIFEKASTRTRLSFEAGMQQLGGSAIYLNTRDSQLGRGEPVEDAAQVISRMSDIVMIRTFEQEIIERFAANSRVPVINGLTNEYHPCQILADIYTYIEHRGCIQGKTVAWVGDANNMCNTWLQAAEVLDFKVHVSTPPAYEIQPELVGKINPARFKVFADPMDACRGADLVTTDVWTSMGFEAENEERIKAFADWCVDGDMMRVANPQAVFMHCLPAHRGEEVTAEVIDGPQSVVWDEAENRLHVQKALMEYLMLGRIQG</sequence>
<dbReference type="EC" id="2.1.3.3" evidence="2"/>
<dbReference type="EMBL" id="CP000089">
    <property type="protein sequence ID" value="AAZ47762.1"/>
    <property type="molecule type" value="Genomic_DNA"/>
</dbReference>
<dbReference type="SMR" id="Q47BL9"/>
<dbReference type="STRING" id="159087.Daro_3032"/>
<dbReference type="KEGG" id="dar:Daro_3032"/>
<dbReference type="eggNOG" id="COG0078">
    <property type="taxonomic scope" value="Bacteria"/>
</dbReference>
<dbReference type="HOGENOM" id="CLU_043846_3_2_4"/>
<dbReference type="OrthoDB" id="9802587at2"/>
<dbReference type="UniPathway" id="UPA00068">
    <property type="reaction ID" value="UER00112"/>
</dbReference>
<dbReference type="GO" id="GO:0005737">
    <property type="term" value="C:cytoplasm"/>
    <property type="evidence" value="ECO:0007669"/>
    <property type="project" value="UniProtKB-SubCell"/>
</dbReference>
<dbReference type="GO" id="GO:0016597">
    <property type="term" value="F:amino acid binding"/>
    <property type="evidence" value="ECO:0007669"/>
    <property type="project" value="InterPro"/>
</dbReference>
<dbReference type="GO" id="GO:0004585">
    <property type="term" value="F:ornithine carbamoyltransferase activity"/>
    <property type="evidence" value="ECO:0007669"/>
    <property type="project" value="UniProtKB-UniRule"/>
</dbReference>
<dbReference type="GO" id="GO:0042450">
    <property type="term" value="P:arginine biosynthetic process via ornithine"/>
    <property type="evidence" value="ECO:0007669"/>
    <property type="project" value="TreeGrafter"/>
</dbReference>
<dbReference type="GO" id="GO:0019240">
    <property type="term" value="P:citrulline biosynthetic process"/>
    <property type="evidence" value="ECO:0007669"/>
    <property type="project" value="TreeGrafter"/>
</dbReference>
<dbReference type="GO" id="GO:0006526">
    <property type="term" value="P:L-arginine biosynthetic process"/>
    <property type="evidence" value="ECO:0007669"/>
    <property type="project" value="UniProtKB-UniPathway"/>
</dbReference>
<dbReference type="FunFam" id="3.40.50.1370:FF:000008">
    <property type="entry name" value="Ornithine carbamoyltransferase"/>
    <property type="match status" value="1"/>
</dbReference>
<dbReference type="Gene3D" id="3.40.50.1370">
    <property type="entry name" value="Aspartate/ornithine carbamoyltransferase"/>
    <property type="match status" value="2"/>
</dbReference>
<dbReference type="HAMAP" id="MF_01109">
    <property type="entry name" value="OTCase"/>
    <property type="match status" value="1"/>
</dbReference>
<dbReference type="InterPro" id="IPR006132">
    <property type="entry name" value="Asp/Orn_carbamoyltranf_P-bd"/>
</dbReference>
<dbReference type="InterPro" id="IPR006130">
    <property type="entry name" value="Asp/Orn_carbamoylTrfase"/>
</dbReference>
<dbReference type="InterPro" id="IPR036901">
    <property type="entry name" value="Asp/Orn_carbamoylTrfase_sf"/>
</dbReference>
<dbReference type="InterPro" id="IPR006131">
    <property type="entry name" value="Asp_carbamoyltransf_Asp/Orn-bd"/>
</dbReference>
<dbReference type="InterPro" id="IPR002292">
    <property type="entry name" value="Orn/put_carbamltrans"/>
</dbReference>
<dbReference type="InterPro" id="IPR024904">
    <property type="entry name" value="OTCase_ArgI"/>
</dbReference>
<dbReference type="NCBIfam" id="TIGR00658">
    <property type="entry name" value="orni_carb_tr"/>
    <property type="match status" value="1"/>
</dbReference>
<dbReference type="NCBIfam" id="NF001986">
    <property type="entry name" value="PRK00779.1"/>
    <property type="match status" value="1"/>
</dbReference>
<dbReference type="PANTHER" id="PTHR45753">
    <property type="entry name" value="ORNITHINE CARBAMOYLTRANSFERASE, MITOCHONDRIAL"/>
    <property type="match status" value="1"/>
</dbReference>
<dbReference type="PANTHER" id="PTHR45753:SF3">
    <property type="entry name" value="ORNITHINE TRANSCARBAMYLASE, MITOCHONDRIAL"/>
    <property type="match status" value="1"/>
</dbReference>
<dbReference type="Pfam" id="PF00185">
    <property type="entry name" value="OTCace"/>
    <property type="match status" value="1"/>
</dbReference>
<dbReference type="Pfam" id="PF02729">
    <property type="entry name" value="OTCace_N"/>
    <property type="match status" value="1"/>
</dbReference>
<dbReference type="PRINTS" id="PR00100">
    <property type="entry name" value="AOTCASE"/>
</dbReference>
<dbReference type="PRINTS" id="PR00102">
    <property type="entry name" value="OTCASE"/>
</dbReference>
<dbReference type="SUPFAM" id="SSF53671">
    <property type="entry name" value="Aspartate/ornithine carbamoyltransferase"/>
    <property type="match status" value="1"/>
</dbReference>
<dbReference type="PROSITE" id="PS00097">
    <property type="entry name" value="CARBAMOYLTRANSFERASE"/>
    <property type="match status" value="1"/>
</dbReference>
<gene>
    <name evidence="2" type="primary">argF</name>
    <name type="ordered locus">Daro_3032</name>
</gene>
<reference key="1">
    <citation type="journal article" date="2009" name="BMC Genomics">
        <title>Metabolic analysis of the soil microbe Dechloromonas aromatica str. RCB: indications of a surprisingly complex life-style and cryptic anaerobic pathways for aromatic degradation.</title>
        <authorList>
            <person name="Salinero K.K."/>
            <person name="Keller K."/>
            <person name="Feil W.S."/>
            <person name="Feil H."/>
            <person name="Trong S."/>
            <person name="Di Bartolo G."/>
            <person name="Lapidus A."/>
        </authorList>
    </citation>
    <scope>NUCLEOTIDE SEQUENCE [LARGE SCALE GENOMIC DNA]</scope>
    <source>
        <strain>RCB</strain>
    </source>
</reference>
<keyword id="KW-0028">Amino-acid biosynthesis</keyword>
<keyword id="KW-0055">Arginine biosynthesis</keyword>
<keyword id="KW-0963">Cytoplasm</keyword>
<keyword id="KW-0808">Transferase</keyword>
<accession>Q47BL9</accession>
<name>OTC_DECAR</name>
<proteinExistence type="inferred from homology"/>
<comment type="function">
    <text evidence="1">Reversibly catalyzes the transfer of the carbamoyl group from carbamoyl phosphate (CP) to the N(epsilon) atom of ornithine (ORN) to produce L-citrulline.</text>
</comment>
<comment type="catalytic activity">
    <reaction evidence="2">
        <text>carbamoyl phosphate + L-ornithine = L-citrulline + phosphate + H(+)</text>
        <dbReference type="Rhea" id="RHEA:19513"/>
        <dbReference type="ChEBI" id="CHEBI:15378"/>
        <dbReference type="ChEBI" id="CHEBI:43474"/>
        <dbReference type="ChEBI" id="CHEBI:46911"/>
        <dbReference type="ChEBI" id="CHEBI:57743"/>
        <dbReference type="ChEBI" id="CHEBI:58228"/>
        <dbReference type="EC" id="2.1.3.3"/>
    </reaction>
</comment>
<comment type="pathway">
    <text evidence="2">Amino-acid biosynthesis; L-arginine biosynthesis; L-arginine from L-ornithine and carbamoyl phosphate: step 1/3.</text>
</comment>
<comment type="subcellular location">
    <subcellularLocation>
        <location evidence="2">Cytoplasm</location>
    </subcellularLocation>
</comment>
<comment type="similarity">
    <text evidence="2">Belongs to the aspartate/ornithine carbamoyltransferase superfamily. OTCase family.</text>
</comment>
<organism>
    <name type="scientific">Dechloromonas aromatica (strain RCB)</name>
    <dbReference type="NCBI Taxonomy" id="159087"/>
    <lineage>
        <taxon>Bacteria</taxon>
        <taxon>Pseudomonadati</taxon>
        <taxon>Pseudomonadota</taxon>
        <taxon>Betaproteobacteria</taxon>
        <taxon>Rhodocyclales</taxon>
        <taxon>Azonexaceae</taxon>
        <taxon>Dechloromonas</taxon>
    </lineage>
</organism>
<feature type="chain" id="PRO_1000137094" description="Ornithine carbamoyltransferase">
    <location>
        <begin position="1"/>
        <end position="306"/>
    </location>
</feature>
<feature type="binding site" evidence="2">
    <location>
        <begin position="53"/>
        <end position="56"/>
    </location>
    <ligand>
        <name>carbamoyl phosphate</name>
        <dbReference type="ChEBI" id="CHEBI:58228"/>
    </ligand>
</feature>
<feature type="binding site" evidence="2">
    <location>
        <position position="80"/>
    </location>
    <ligand>
        <name>carbamoyl phosphate</name>
        <dbReference type="ChEBI" id="CHEBI:58228"/>
    </ligand>
</feature>
<feature type="binding site" evidence="2">
    <location>
        <position position="104"/>
    </location>
    <ligand>
        <name>carbamoyl phosphate</name>
        <dbReference type="ChEBI" id="CHEBI:58228"/>
    </ligand>
</feature>
<feature type="binding site" evidence="2">
    <location>
        <begin position="131"/>
        <end position="134"/>
    </location>
    <ligand>
        <name>carbamoyl phosphate</name>
        <dbReference type="ChEBI" id="CHEBI:58228"/>
    </ligand>
</feature>
<feature type="binding site" evidence="2">
    <location>
        <position position="162"/>
    </location>
    <ligand>
        <name>L-ornithine</name>
        <dbReference type="ChEBI" id="CHEBI:46911"/>
    </ligand>
</feature>
<feature type="binding site" evidence="2">
    <location>
        <position position="220"/>
    </location>
    <ligand>
        <name>L-ornithine</name>
        <dbReference type="ChEBI" id="CHEBI:46911"/>
    </ligand>
</feature>
<feature type="binding site" evidence="2">
    <location>
        <begin position="224"/>
        <end position="225"/>
    </location>
    <ligand>
        <name>L-ornithine</name>
        <dbReference type="ChEBI" id="CHEBI:46911"/>
    </ligand>
</feature>
<feature type="binding site" evidence="2">
    <location>
        <begin position="260"/>
        <end position="261"/>
    </location>
    <ligand>
        <name>carbamoyl phosphate</name>
        <dbReference type="ChEBI" id="CHEBI:58228"/>
    </ligand>
</feature>
<feature type="binding site" evidence="2">
    <location>
        <position position="288"/>
    </location>
    <ligand>
        <name>carbamoyl phosphate</name>
        <dbReference type="ChEBI" id="CHEBI:58228"/>
    </ligand>
</feature>